<feature type="initiator methionine" description="Removed" evidence="1">
    <location>
        <position position="1"/>
    </location>
</feature>
<feature type="chain" id="PRO_0000097828" description="Cyclic pyranopterin monophosphate synthase">
    <location>
        <begin position="2"/>
        <end position="161"/>
    </location>
</feature>
<feature type="active site" evidence="2">
    <location>
        <position position="128"/>
    </location>
</feature>
<feature type="binding site" evidence="2">
    <location>
        <begin position="75"/>
        <end position="77"/>
    </location>
    <ligand>
        <name>substrate</name>
    </ligand>
</feature>
<feature type="binding site" evidence="2">
    <location>
        <begin position="113"/>
        <end position="114"/>
    </location>
    <ligand>
        <name>substrate</name>
    </ligand>
</feature>
<dbReference type="EC" id="4.6.1.17" evidence="2"/>
<dbReference type="EMBL" id="AE005674">
    <property type="protein sequence ID" value="AAN42368.1"/>
    <property type="molecule type" value="Genomic_DNA"/>
</dbReference>
<dbReference type="EMBL" id="AE014073">
    <property type="protein sequence ID" value="AAP16245.1"/>
    <property type="molecule type" value="Genomic_DNA"/>
</dbReference>
<dbReference type="RefSeq" id="NP_706661.1">
    <property type="nucleotide sequence ID" value="NC_004337.2"/>
</dbReference>
<dbReference type="RefSeq" id="WP_000080885.1">
    <property type="nucleotide sequence ID" value="NZ_WPGW01000030.1"/>
</dbReference>
<dbReference type="SMR" id="P0A741"/>
<dbReference type="STRING" id="198214.SF0733"/>
<dbReference type="PaxDb" id="198214-SF0733"/>
<dbReference type="GeneID" id="1023713"/>
<dbReference type="GeneID" id="86945666"/>
<dbReference type="KEGG" id="sfl:SF0733"/>
<dbReference type="KEGG" id="sfx:S0774"/>
<dbReference type="PATRIC" id="fig|198214.7.peg.853"/>
<dbReference type="HOGENOM" id="CLU_074693_1_1_6"/>
<dbReference type="UniPathway" id="UPA00344"/>
<dbReference type="Proteomes" id="UP000001006">
    <property type="component" value="Chromosome"/>
</dbReference>
<dbReference type="Proteomes" id="UP000002673">
    <property type="component" value="Chromosome"/>
</dbReference>
<dbReference type="GO" id="GO:0061799">
    <property type="term" value="F:cyclic pyranopterin monophosphate synthase activity"/>
    <property type="evidence" value="ECO:0007669"/>
    <property type="project" value="UniProtKB-UniRule"/>
</dbReference>
<dbReference type="GO" id="GO:0006777">
    <property type="term" value="P:Mo-molybdopterin cofactor biosynthetic process"/>
    <property type="evidence" value="ECO:0007669"/>
    <property type="project" value="UniProtKB-UniRule"/>
</dbReference>
<dbReference type="CDD" id="cd01420">
    <property type="entry name" value="MoaC_PE"/>
    <property type="match status" value="1"/>
</dbReference>
<dbReference type="FunFam" id="3.30.70.640:FF:000001">
    <property type="entry name" value="Cyclic pyranopterin monophosphate synthase"/>
    <property type="match status" value="1"/>
</dbReference>
<dbReference type="Gene3D" id="3.30.70.640">
    <property type="entry name" value="Molybdopterin cofactor biosynthesis C (MoaC) domain"/>
    <property type="match status" value="1"/>
</dbReference>
<dbReference type="HAMAP" id="MF_01224_B">
    <property type="entry name" value="MoaC_B"/>
    <property type="match status" value="1"/>
</dbReference>
<dbReference type="InterPro" id="IPR023045">
    <property type="entry name" value="MoaC"/>
</dbReference>
<dbReference type="InterPro" id="IPR047594">
    <property type="entry name" value="MoaC_bact/euk"/>
</dbReference>
<dbReference type="InterPro" id="IPR036522">
    <property type="entry name" value="MoaC_sf"/>
</dbReference>
<dbReference type="InterPro" id="IPR050105">
    <property type="entry name" value="MoCo_biosynth_MoaA/MoaC"/>
</dbReference>
<dbReference type="InterPro" id="IPR002820">
    <property type="entry name" value="Mopterin_CF_biosynth-C_dom"/>
</dbReference>
<dbReference type="NCBIfam" id="TIGR00581">
    <property type="entry name" value="moaC"/>
    <property type="match status" value="1"/>
</dbReference>
<dbReference type="NCBIfam" id="NF006870">
    <property type="entry name" value="PRK09364.1"/>
    <property type="match status" value="1"/>
</dbReference>
<dbReference type="PANTHER" id="PTHR22960">
    <property type="entry name" value="MOLYBDOPTERIN COFACTOR SYNTHESIS PROTEIN A"/>
    <property type="match status" value="1"/>
</dbReference>
<dbReference type="Pfam" id="PF01967">
    <property type="entry name" value="MoaC"/>
    <property type="match status" value="1"/>
</dbReference>
<dbReference type="SUPFAM" id="SSF55040">
    <property type="entry name" value="Molybdenum cofactor biosynthesis protein C, MoaC"/>
    <property type="match status" value="1"/>
</dbReference>
<sequence length="161" mass="17467">MSQLTHINAAGEAHMVDVSAKAETVREARAEAFVTMRSETLAMIIDGRHHKGDVFATARIAGIQAAKRTWDLIPLCHPLMLSKVEVNLQAEPEHNRVRIETLCRLTGKTGVEMEALTAASVAALTIYDMCKAVQKDMVIGPVRLLAKSGGKSGDFKVEADD</sequence>
<protein>
    <recommendedName>
        <fullName evidence="2">Cyclic pyranopterin monophosphate synthase</fullName>
        <ecNumber evidence="2">4.6.1.17</ecNumber>
    </recommendedName>
    <alternativeName>
        <fullName evidence="2">Molybdenum cofactor biosynthesis protein C</fullName>
    </alternativeName>
</protein>
<name>MOAC_SHIFL</name>
<accession>P0A741</accession>
<accession>P30747</accession>
<accession>P77530</accession>
<reference key="1">
    <citation type="journal article" date="2002" name="Nucleic Acids Res.">
        <title>Genome sequence of Shigella flexneri 2a: insights into pathogenicity through comparison with genomes of Escherichia coli K12 and O157.</title>
        <authorList>
            <person name="Jin Q."/>
            <person name="Yuan Z."/>
            <person name="Xu J."/>
            <person name="Wang Y."/>
            <person name="Shen Y."/>
            <person name="Lu W."/>
            <person name="Wang J."/>
            <person name="Liu H."/>
            <person name="Yang J."/>
            <person name="Yang F."/>
            <person name="Zhang X."/>
            <person name="Zhang J."/>
            <person name="Yang G."/>
            <person name="Wu H."/>
            <person name="Qu D."/>
            <person name="Dong J."/>
            <person name="Sun L."/>
            <person name="Xue Y."/>
            <person name="Zhao A."/>
            <person name="Gao Y."/>
            <person name="Zhu J."/>
            <person name="Kan B."/>
            <person name="Ding K."/>
            <person name="Chen S."/>
            <person name="Cheng H."/>
            <person name="Yao Z."/>
            <person name="He B."/>
            <person name="Chen R."/>
            <person name="Ma D."/>
            <person name="Qiang B."/>
            <person name="Wen Y."/>
            <person name="Hou Y."/>
            <person name="Yu J."/>
        </authorList>
    </citation>
    <scope>NUCLEOTIDE SEQUENCE [LARGE SCALE GENOMIC DNA]</scope>
    <source>
        <strain>301 / Serotype 2a</strain>
    </source>
</reference>
<reference key="2">
    <citation type="journal article" date="2003" name="Infect. Immun.">
        <title>Complete genome sequence and comparative genomics of Shigella flexneri serotype 2a strain 2457T.</title>
        <authorList>
            <person name="Wei J."/>
            <person name="Goldberg M.B."/>
            <person name="Burland V."/>
            <person name="Venkatesan M.M."/>
            <person name="Deng W."/>
            <person name="Fournier G."/>
            <person name="Mayhew G.F."/>
            <person name="Plunkett G. III"/>
            <person name="Rose D.J."/>
            <person name="Darling A."/>
            <person name="Mau B."/>
            <person name="Perna N.T."/>
            <person name="Payne S.M."/>
            <person name="Runyen-Janecky L.J."/>
            <person name="Zhou S."/>
            <person name="Schwartz D.C."/>
            <person name="Blattner F.R."/>
        </authorList>
    </citation>
    <scope>NUCLEOTIDE SEQUENCE [LARGE SCALE GENOMIC DNA]</scope>
    <source>
        <strain>ATCC 700930 / 2457T / Serotype 2a</strain>
    </source>
</reference>
<gene>
    <name evidence="2" type="primary">moaC</name>
    <name type="synonym">chlA3</name>
    <name type="ordered locus">SF0733</name>
    <name type="ordered locus">S0774</name>
</gene>
<organism>
    <name type="scientific">Shigella flexneri</name>
    <dbReference type="NCBI Taxonomy" id="623"/>
    <lineage>
        <taxon>Bacteria</taxon>
        <taxon>Pseudomonadati</taxon>
        <taxon>Pseudomonadota</taxon>
        <taxon>Gammaproteobacteria</taxon>
        <taxon>Enterobacterales</taxon>
        <taxon>Enterobacteriaceae</taxon>
        <taxon>Shigella</taxon>
    </lineage>
</organism>
<evidence type="ECO:0000250" key="1"/>
<evidence type="ECO:0000255" key="2">
    <source>
        <dbReference type="HAMAP-Rule" id="MF_01224"/>
    </source>
</evidence>
<keyword id="KW-0456">Lyase</keyword>
<keyword id="KW-0501">Molybdenum cofactor biosynthesis</keyword>
<keyword id="KW-1185">Reference proteome</keyword>
<proteinExistence type="inferred from homology"/>
<comment type="function">
    <text evidence="2">Catalyzes the conversion of (8S)-3',8-cyclo-7,8-dihydroguanosine 5'-triphosphate to cyclic pyranopterin monophosphate (cPMP).</text>
</comment>
<comment type="catalytic activity">
    <reaction evidence="2">
        <text>(8S)-3',8-cyclo-7,8-dihydroguanosine 5'-triphosphate = cyclic pyranopterin phosphate + diphosphate</text>
        <dbReference type="Rhea" id="RHEA:49580"/>
        <dbReference type="ChEBI" id="CHEBI:33019"/>
        <dbReference type="ChEBI" id="CHEBI:59648"/>
        <dbReference type="ChEBI" id="CHEBI:131766"/>
        <dbReference type="EC" id="4.6.1.17"/>
    </reaction>
</comment>
<comment type="pathway">
    <text evidence="2">Cofactor biosynthesis; molybdopterin biosynthesis.</text>
</comment>
<comment type="subunit">
    <text evidence="2">Homohexamer; trimer of dimers.</text>
</comment>
<comment type="similarity">
    <text evidence="2">Belongs to the MoaC family.</text>
</comment>